<sequence length="619" mass="68158">MSPLASNPPVPAATDPSVIRNFCIIAHIDHGKSTLADRMLQATGVVQPRDMKAQYLDRMDIERERGITIKSQAVRMPWSVDGVDYALNMIDTPGHVDFTYEVSRSLAACEGAILLVDAAQGIEAQTLANLYLAMEHELEIIPVLNKIDLPAADPDRYAAELASLIGCEPEDVLRVSGKTGVGVEELLDRVVRAIPGPEGDADAPARAMIFDSVYDTYRGVVTYVRVVDGRLSPREKVRMMSTGTTYELLEIGVSSPEPVPTKGLAAGEVGYLITGVKDVRQSKVGDTVTNHAHPAEQSLGGYEDPKPMVFSGLYPIDGSDYPVLRDALDKLKLNDAALVYEPETSVALGFGFRVGFLGLLHLEIVRERLEREFDLDLISTAPNVVYEVTREDREVVTVTNPSEFPEGKILEVREPMASATIIVPAEFIGAVMELCQAKRGNLKGMDYLSEERVEIRYWIPLAEIVFDFFDQLKSRTKGYASLDWKADGDQVADLVKVDILLQGEQVDAFSSITHRDNAYAYGVMMTGKLKELIPRQQYEVPIQAAIGSRIIARENIRAIRKDVLSKCYGGDISRKRKLLEKQKEGKKRMKMVGRVEVPQEAFIAALSSDGAGADQAAKK</sequence>
<dbReference type="EC" id="3.6.5.n1" evidence="1"/>
<dbReference type="EMBL" id="CP001628">
    <property type="protein sequence ID" value="ACS30746.1"/>
    <property type="molecule type" value="Genomic_DNA"/>
</dbReference>
<dbReference type="RefSeq" id="WP_010078615.1">
    <property type="nucleotide sequence ID" value="NZ_WBMF01000079.1"/>
</dbReference>
<dbReference type="SMR" id="C5CCD4"/>
<dbReference type="STRING" id="465515.Mlut_12410"/>
<dbReference type="EnsemblBacteria" id="ACS30746">
    <property type="protein sequence ID" value="ACS30746"/>
    <property type="gene ID" value="Mlut_12410"/>
</dbReference>
<dbReference type="GeneID" id="93362507"/>
<dbReference type="KEGG" id="mlu:Mlut_12410"/>
<dbReference type="eggNOG" id="COG0481">
    <property type="taxonomic scope" value="Bacteria"/>
</dbReference>
<dbReference type="HOGENOM" id="CLU_009995_3_3_11"/>
<dbReference type="Proteomes" id="UP000000738">
    <property type="component" value="Chromosome"/>
</dbReference>
<dbReference type="GO" id="GO:0005886">
    <property type="term" value="C:plasma membrane"/>
    <property type="evidence" value="ECO:0007669"/>
    <property type="project" value="UniProtKB-SubCell"/>
</dbReference>
<dbReference type="GO" id="GO:0005525">
    <property type="term" value="F:GTP binding"/>
    <property type="evidence" value="ECO:0007669"/>
    <property type="project" value="UniProtKB-UniRule"/>
</dbReference>
<dbReference type="GO" id="GO:0003924">
    <property type="term" value="F:GTPase activity"/>
    <property type="evidence" value="ECO:0007669"/>
    <property type="project" value="UniProtKB-UniRule"/>
</dbReference>
<dbReference type="GO" id="GO:0043022">
    <property type="term" value="F:ribosome binding"/>
    <property type="evidence" value="ECO:0007669"/>
    <property type="project" value="UniProtKB-UniRule"/>
</dbReference>
<dbReference type="GO" id="GO:0003746">
    <property type="term" value="F:translation elongation factor activity"/>
    <property type="evidence" value="ECO:0007669"/>
    <property type="project" value="UniProtKB-UniRule"/>
</dbReference>
<dbReference type="GO" id="GO:0045727">
    <property type="term" value="P:positive regulation of translation"/>
    <property type="evidence" value="ECO:0007669"/>
    <property type="project" value="UniProtKB-UniRule"/>
</dbReference>
<dbReference type="CDD" id="cd03699">
    <property type="entry name" value="EF4_II"/>
    <property type="match status" value="1"/>
</dbReference>
<dbReference type="CDD" id="cd16260">
    <property type="entry name" value="EF4_III"/>
    <property type="match status" value="1"/>
</dbReference>
<dbReference type="CDD" id="cd01890">
    <property type="entry name" value="LepA"/>
    <property type="match status" value="1"/>
</dbReference>
<dbReference type="CDD" id="cd03709">
    <property type="entry name" value="lepA_C"/>
    <property type="match status" value="1"/>
</dbReference>
<dbReference type="FunFam" id="3.40.50.300:FF:000078">
    <property type="entry name" value="Elongation factor 4"/>
    <property type="match status" value="1"/>
</dbReference>
<dbReference type="FunFam" id="2.40.30.10:FF:000015">
    <property type="entry name" value="Translation factor GUF1, mitochondrial"/>
    <property type="match status" value="1"/>
</dbReference>
<dbReference type="FunFam" id="3.30.70.240:FF:000007">
    <property type="entry name" value="Translation factor GUF1, mitochondrial"/>
    <property type="match status" value="1"/>
</dbReference>
<dbReference type="FunFam" id="3.30.70.2570:FF:000001">
    <property type="entry name" value="Translation factor GUF1, mitochondrial"/>
    <property type="match status" value="1"/>
</dbReference>
<dbReference type="FunFam" id="3.30.70.870:FF:000004">
    <property type="entry name" value="Translation factor GUF1, mitochondrial"/>
    <property type="match status" value="1"/>
</dbReference>
<dbReference type="Gene3D" id="3.30.70.240">
    <property type="match status" value="1"/>
</dbReference>
<dbReference type="Gene3D" id="3.30.70.2570">
    <property type="entry name" value="Elongation factor 4, C-terminal domain"/>
    <property type="match status" value="1"/>
</dbReference>
<dbReference type="Gene3D" id="3.30.70.870">
    <property type="entry name" value="Elongation Factor G (Translational Gtpase), domain 3"/>
    <property type="match status" value="1"/>
</dbReference>
<dbReference type="Gene3D" id="3.40.50.300">
    <property type="entry name" value="P-loop containing nucleotide triphosphate hydrolases"/>
    <property type="match status" value="1"/>
</dbReference>
<dbReference type="Gene3D" id="2.40.30.10">
    <property type="entry name" value="Translation factors"/>
    <property type="match status" value="1"/>
</dbReference>
<dbReference type="HAMAP" id="MF_00071">
    <property type="entry name" value="LepA"/>
    <property type="match status" value="1"/>
</dbReference>
<dbReference type="InterPro" id="IPR006297">
    <property type="entry name" value="EF-4"/>
</dbReference>
<dbReference type="InterPro" id="IPR035647">
    <property type="entry name" value="EFG_III/V"/>
</dbReference>
<dbReference type="InterPro" id="IPR000640">
    <property type="entry name" value="EFG_V-like"/>
</dbReference>
<dbReference type="InterPro" id="IPR004161">
    <property type="entry name" value="EFTu-like_2"/>
</dbReference>
<dbReference type="InterPro" id="IPR031157">
    <property type="entry name" value="G_TR_CS"/>
</dbReference>
<dbReference type="InterPro" id="IPR038363">
    <property type="entry name" value="LepA_C_sf"/>
</dbReference>
<dbReference type="InterPro" id="IPR013842">
    <property type="entry name" value="LepA_CTD"/>
</dbReference>
<dbReference type="InterPro" id="IPR035654">
    <property type="entry name" value="LepA_IV"/>
</dbReference>
<dbReference type="InterPro" id="IPR027417">
    <property type="entry name" value="P-loop_NTPase"/>
</dbReference>
<dbReference type="InterPro" id="IPR005225">
    <property type="entry name" value="Small_GTP-bd"/>
</dbReference>
<dbReference type="InterPro" id="IPR000795">
    <property type="entry name" value="T_Tr_GTP-bd_dom"/>
</dbReference>
<dbReference type="InterPro" id="IPR009000">
    <property type="entry name" value="Transl_B-barrel_sf"/>
</dbReference>
<dbReference type="NCBIfam" id="TIGR01393">
    <property type="entry name" value="lepA"/>
    <property type="match status" value="1"/>
</dbReference>
<dbReference type="NCBIfam" id="TIGR00231">
    <property type="entry name" value="small_GTP"/>
    <property type="match status" value="1"/>
</dbReference>
<dbReference type="PANTHER" id="PTHR43512:SF4">
    <property type="entry name" value="TRANSLATION FACTOR GUF1 HOMOLOG, CHLOROPLASTIC"/>
    <property type="match status" value="1"/>
</dbReference>
<dbReference type="PANTHER" id="PTHR43512">
    <property type="entry name" value="TRANSLATION FACTOR GUF1-RELATED"/>
    <property type="match status" value="1"/>
</dbReference>
<dbReference type="Pfam" id="PF00679">
    <property type="entry name" value="EFG_C"/>
    <property type="match status" value="1"/>
</dbReference>
<dbReference type="Pfam" id="PF00009">
    <property type="entry name" value="GTP_EFTU"/>
    <property type="match status" value="1"/>
</dbReference>
<dbReference type="Pfam" id="PF03144">
    <property type="entry name" value="GTP_EFTU_D2"/>
    <property type="match status" value="1"/>
</dbReference>
<dbReference type="Pfam" id="PF06421">
    <property type="entry name" value="LepA_C"/>
    <property type="match status" value="1"/>
</dbReference>
<dbReference type="PRINTS" id="PR00315">
    <property type="entry name" value="ELONGATNFCT"/>
</dbReference>
<dbReference type="SMART" id="SM00838">
    <property type="entry name" value="EFG_C"/>
    <property type="match status" value="1"/>
</dbReference>
<dbReference type="SUPFAM" id="SSF54980">
    <property type="entry name" value="EF-G C-terminal domain-like"/>
    <property type="match status" value="2"/>
</dbReference>
<dbReference type="SUPFAM" id="SSF52540">
    <property type="entry name" value="P-loop containing nucleoside triphosphate hydrolases"/>
    <property type="match status" value="1"/>
</dbReference>
<dbReference type="SUPFAM" id="SSF50447">
    <property type="entry name" value="Translation proteins"/>
    <property type="match status" value="1"/>
</dbReference>
<dbReference type="PROSITE" id="PS00301">
    <property type="entry name" value="G_TR_1"/>
    <property type="match status" value="1"/>
</dbReference>
<dbReference type="PROSITE" id="PS51722">
    <property type="entry name" value="G_TR_2"/>
    <property type="match status" value="1"/>
</dbReference>
<proteinExistence type="inferred from homology"/>
<comment type="function">
    <text evidence="1">Required for accurate and efficient protein synthesis under certain stress conditions. May act as a fidelity factor of the translation reaction, by catalyzing a one-codon backward translocation of tRNAs on improperly translocated ribosomes. Back-translocation proceeds from a post-translocation (POST) complex to a pre-translocation (PRE) complex, thus giving elongation factor G a second chance to translocate the tRNAs correctly. Binds to ribosomes in a GTP-dependent manner.</text>
</comment>
<comment type="catalytic activity">
    <reaction evidence="1">
        <text>GTP + H2O = GDP + phosphate + H(+)</text>
        <dbReference type="Rhea" id="RHEA:19669"/>
        <dbReference type="ChEBI" id="CHEBI:15377"/>
        <dbReference type="ChEBI" id="CHEBI:15378"/>
        <dbReference type="ChEBI" id="CHEBI:37565"/>
        <dbReference type="ChEBI" id="CHEBI:43474"/>
        <dbReference type="ChEBI" id="CHEBI:58189"/>
        <dbReference type="EC" id="3.6.5.n1"/>
    </reaction>
</comment>
<comment type="subcellular location">
    <subcellularLocation>
        <location evidence="1">Cell membrane</location>
        <topology evidence="1">Peripheral membrane protein</topology>
        <orientation evidence="1">Cytoplasmic side</orientation>
    </subcellularLocation>
</comment>
<comment type="similarity">
    <text evidence="1">Belongs to the TRAFAC class translation factor GTPase superfamily. Classic translation factor GTPase family. LepA subfamily.</text>
</comment>
<protein>
    <recommendedName>
        <fullName evidence="1">Elongation factor 4</fullName>
        <shortName evidence="1">EF-4</shortName>
        <ecNumber evidence="1">3.6.5.n1</ecNumber>
    </recommendedName>
    <alternativeName>
        <fullName evidence="1">Ribosomal back-translocase LepA</fullName>
    </alternativeName>
</protein>
<feature type="chain" id="PRO_1000202455" description="Elongation factor 4">
    <location>
        <begin position="1"/>
        <end position="619"/>
    </location>
</feature>
<feature type="domain" description="tr-type G">
    <location>
        <begin position="17"/>
        <end position="198"/>
    </location>
</feature>
<feature type="binding site" evidence="1">
    <location>
        <begin position="29"/>
        <end position="34"/>
    </location>
    <ligand>
        <name>GTP</name>
        <dbReference type="ChEBI" id="CHEBI:37565"/>
    </ligand>
</feature>
<feature type="binding site" evidence="1">
    <location>
        <begin position="145"/>
        <end position="148"/>
    </location>
    <ligand>
        <name>GTP</name>
        <dbReference type="ChEBI" id="CHEBI:37565"/>
    </ligand>
</feature>
<gene>
    <name evidence="1" type="primary">lepA</name>
    <name type="ordered locus">Mlut_12410</name>
</gene>
<accession>C5CCD4</accession>
<evidence type="ECO:0000255" key="1">
    <source>
        <dbReference type="HAMAP-Rule" id="MF_00071"/>
    </source>
</evidence>
<keyword id="KW-1003">Cell membrane</keyword>
<keyword id="KW-0342">GTP-binding</keyword>
<keyword id="KW-0378">Hydrolase</keyword>
<keyword id="KW-0472">Membrane</keyword>
<keyword id="KW-0547">Nucleotide-binding</keyword>
<keyword id="KW-0648">Protein biosynthesis</keyword>
<keyword id="KW-1185">Reference proteome</keyword>
<name>LEPA_MICLC</name>
<reference key="1">
    <citation type="journal article" date="2010" name="J. Bacteriol.">
        <title>Genome sequence of the Fleming strain of Micrococcus luteus, a simple free-living actinobacterium.</title>
        <authorList>
            <person name="Young M."/>
            <person name="Artsatbanov V."/>
            <person name="Beller H.R."/>
            <person name="Chandra G."/>
            <person name="Chater K.F."/>
            <person name="Dover L.G."/>
            <person name="Goh E.B."/>
            <person name="Kahan T."/>
            <person name="Kaprelyants A.S."/>
            <person name="Kyrpides N."/>
            <person name="Lapidus A."/>
            <person name="Lowry S.R."/>
            <person name="Lykidis A."/>
            <person name="Mahillon J."/>
            <person name="Markowitz V."/>
            <person name="Mavromatis K."/>
            <person name="Mukamolova G.V."/>
            <person name="Oren A."/>
            <person name="Rokem J.S."/>
            <person name="Smith M.C."/>
            <person name="Young D.I."/>
            <person name="Greenblatt C.L."/>
        </authorList>
    </citation>
    <scope>NUCLEOTIDE SEQUENCE [LARGE SCALE GENOMIC DNA]</scope>
    <source>
        <strain>ATCC 4698 / DSM 20030 / JCM 1464 / CCM 169 / CCUG 5858 / IAM 1056 / NBRC 3333 / NCIMB 9278 / NCTC 2665 / VKM Ac-2230</strain>
    </source>
</reference>
<organism>
    <name type="scientific">Micrococcus luteus (strain ATCC 4698 / DSM 20030 / JCM 1464 / CCM 169 / CCUG 5858 / IAM 1056 / NBRC 3333 / NCIMB 9278 / NCTC 2665 / VKM Ac-2230)</name>
    <name type="common">Micrococcus lysodeikticus</name>
    <dbReference type="NCBI Taxonomy" id="465515"/>
    <lineage>
        <taxon>Bacteria</taxon>
        <taxon>Bacillati</taxon>
        <taxon>Actinomycetota</taxon>
        <taxon>Actinomycetes</taxon>
        <taxon>Micrococcales</taxon>
        <taxon>Micrococcaceae</taxon>
        <taxon>Micrococcus</taxon>
    </lineage>
</organism>